<evidence type="ECO:0000250" key="1"/>
<evidence type="ECO:0000256" key="2">
    <source>
        <dbReference type="SAM" id="MobiDB-lite"/>
    </source>
</evidence>
<evidence type="ECO:0000269" key="3">
    <source>
    </source>
</evidence>
<evidence type="ECO:0000305" key="4"/>
<accession>P49148</accession>
<keyword id="KW-0020">Allergen</keyword>
<keyword id="KW-0597">Phosphoprotein</keyword>
<keyword id="KW-0687">Ribonucleoprotein</keyword>
<keyword id="KW-0689">Ribosomal protein</keyword>
<feature type="chain" id="PRO_0000157700" description="Large ribosomal subunit protein P1">
    <location>
        <begin position="1"/>
        <end position="110"/>
    </location>
</feature>
<feature type="region of interest" description="Disordered" evidence="2">
    <location>
        <begin position="87"/>
        <end position="110"/>
    </location>
</feature>
<dbReference type="EMBL" id="X84216">
    <property type="protein sequence ID" value="CAA58998.1"/>
    <property type="molecule type" value="mRNA"/>
</dbReference>
<dbReference type="SMR" id="P49148"/>
<dbReference type="Allergome" id="15">
    <property type="allergen name" value="Alt a 12"/>
</dbReference>
<dbReference type="Allergome" id="3058">
    <property type="allergen name" value="Alt a 12.0101"/>
</dbReference>
<dbReference type="VEuPathDB" id="FungiDB:CC77DRAFT_226917"/>
<dbReference type="GO" id="GO:0022625">
    <property type="term" value="C:cytosolic large ribosomal subunit"/>
    <property type="evidence" value="ECO:0007669"/>
    <property type="project" value="TreeGrafter"/>
</dbReference>
<dbReference type="GO" id="GO:0030295">
    <property type="term" value="F:protein kinase activator activity"/>
    <property type="evidence" value="ECO:0007669"/>
    <property type="project" value="TreeGrafter"/>
</dbReference>
<dbReference type="GO" id="GO:0043021">
    <property type="term" value="F:ribonucleoprotein complex binding"/>
    <property type="evidence" value="ECO:0007669"/>
    <property type="project" value="TreeGrafter"/>
</dbReference>
<dbReference type="GO" id="GO:0003735">
    <property type="term" value="F:structural constituent of ribosome"/>
    <property type="evidence" value="ECO:0007669"/>
    <property type="project" value="InterPro"/>
</dbReference>
<dbReference type="GO" id="GO:0002181">
    <property type="term" value="P:cytoplasmic translation"/>
    <property type="evidence" value="ECO:0007669"/>
    <property type="project" value="TreeGrafter"/>
</dbReference>
<dbReference type="GO" id="GO:0006414">
    <property type="term" value="P:translational elongation"/>
    <property type="evidence" value="ECO:0007669"/>
    <property type="project" value="InterPro"/>
</dbReference>
<dbReference type="CDD" id="cd05831">
    <property type="entry name" value="Ribosomal_P1"/>
    <property type="match status" value="1"/>
</dbReference>
<dbReference type="FunFam" id="1.10.10.1410:FF:000001">
    <property type="entry name" value="60S acidic ribosomal protein P1"/>
    <property type="match status" value="1"/>
</dbReference>
<dbReference type="Gene3D" id="1.10.10.1410">
    <property type="match status" value="1"/>
</dbReference>
<dbReference type="HAMAP" id="MF_01478">
    <property type="entry name" value="Ribosomal_L12_arch"/>
    <property type="match status" value="1"/>
</dbReference>
<dbReference type="InterPro" id="IPR038716">
    <property type="entry name" value="P1/P2_N_sf"/>
</dbReference>
<dbReference type="InterPro" id="IPR027534">
    <property type="entry name" value="Ribosomal_P1/P2"/>
</dbReference>
<dbReference type="PANTHER" id="PTHR45696">
    <property type="entry name" value="60S ACIDIC RIBOSOMAL PROTEIN P1"/>
    <property type="match status" value="1"/>
</dbReference>
<dbReference type="PANTHER" id="PTHR45696:SF10">
    <property type="entry name" value="LARGE RIBOSOMAL SUBUNIT PROTEIN P1"/>
    <property type="match status" value="1"/>
</dbReference>
<dbReference type="Pfam" id="PF00428">
    <property type="entry name" value="Ribosomal_60s"/>
    <property type="match status" value="1"/>
</dbReference>
<gene>
    <name type="primary">ALTA12</name>
</gene>
<reference key="1">
    <citation type="journal article" date="1995" name="Mol. Immunol.">
        <title>Molecular cloning of major and minor allergens of Alternaria alternata and Cladosporium herbarum.</title>
        <authorList>
            <person name="Achatz G."/>
            <person name="Oberkofler H."/>
            <person name="Lechenauer E."/>
            <person name="Simon-Nobbe B."/>
            <person name="Unger A."/>
            <person name="Kandler D."/>
            <person name="Ebner C."/>
            <person name="Prillinger H."/>
            <person name="Kraft D."/>
            <person name="Breitenbach M."/>
        </authorList>
    </citation>
    <scope>NUCLEOTIDE SEQUENCE [MRNA]</scope>
    <scope>ALLERGEN</scope>
    <source>
        <strain>08-0203-Berlin</strain>
    </source>
</reference>
<comment type="function">
    <text>Plays an important role in the elongation step of protein synthesis.</text>
</comment>
<comment type="subunit">
    <text>P1 and P2 exist as dimers at the large ribosomal subunit.</text>
</comment>
<comment type="PTM">
    <text evidence="1">Phosphorylated.</text>
</comment>
<comment type="allergen">
    <text evidence="3">Causes an allergic reaction in human.</text>
</comment>
<comment type="similarity">
    <text evidence="4">Belongs to the eukaryotic ribosomal protein P1/P2 family.</text>
</comment>
<sequence length="110" mass="11736">MSTSELATSYAALILADDGVDITADKLQSLIKAAKIEEVEPIWTTLFAKALEGKDVKDLLLNVGSGGGAAPLPEALLLRWRAADAAPAAEEKKEEEKEESDEDMGFGLFD</sequence>
<proteinExistence type="evidence at protein level"/>
<protein>
    <recommendedName>
        <fullName evidence="4">Large ribosomal subunit protein P1</fullName>
    </recommendedName>
    <alternativeName>
        <fullName>60S acidic ribosomal protein P1</fullName>
    </alternativeName>
    <alternativeName>
        <fullName>Allergen Alt a XII</fullName>
    </alternativeName>
    <allergenName>Alt a 12</allergenName>
</protein>
<organism>
    <name type="scientific">Alternaria alternata</name>
    <name type="common">Alternaria rot fungus</name>
    <name type="synonym">Torula alternata</name>
    <dbReference type="NCBI Taxonomy" id="5599"/>
    <lineage>
        <taxon>Eukaryota</taxon>
        <taxon>Fungi</taxon>
        <taxon>Dikarya</taxon>
        <taxon>Ascomycota</taxon>
        <taxon>Pezizomycotina</taxon>
        <taxon>Dothideomycetes</taxon>
        <taxon>Pleosporomycetidae</taxon>
        <taxon>Pleosporales</taxon>
        <taxon>Pleosporineae</taxon>
        <taxon>Pleosporaceae</taxon>
        <taxon>Alternaria</taxon>
        <taxon>Alternaria sect. Alternaria</taxon>
        <taxon>Alternaria alternata complex</taxon>
    </lineage>
</organism>
<name>RLA1_ALTAL</name>